<proteinExistence type="inferred from homology"/>
<organism>
    <name type="scientific">Burkholderia mallei (strain NCTC 10229)</name>
    <dbReference type="NCBI Taxonomy" id="412022"/>
    <lineage>
        <taxon>Bacteria</taxon>
        <taxon>Pseudomonadati</taxon>
        <taxon>Pseudomonadota</taxon>
        <taxon>Betaproteobacteria</taxon>
        <taxon>Burkholderiales</taxon>
        <taxon>Burkholderiaceae</taxon>
        <taxon>Burkholderia</taxon>
        <taxon>pseudomallei group</taxon>
    </lineage>
</organism>
<protein>
    <recommendedName>
        <fullName evidence="1">Large ribosomal subunit protein bL36</fullName>
    </recommendedName>
    <alternativeName>
        <fullName evidence="2">50S ribosomal protein L36</fullName>
    </alternativeName>
</protein>
<evidence type="ECO:0000255" key="1">
    <source>
        <dbReference type="HAMAP-Rule" id="MF_00251"/>
    </source>
</evidence>
<evidence type="ECO:0000305" key="2"/>
<dbReference type="EMBL" id="CP000546">
    <property type="protein sequence ID" value="ABN03552.1"/>
    <property type="status" value="ALT_INIT"/>
    <property type="molecule type" value="Genomic_DNA"/>
</dbReference>
<dbReference type="RefSeq" id="WP_004199844.1">
    <property type="nucleotide sequence ID" value="NC_008836.1"/>
</dbReference>
<dbReference type="SMR" id="A2S7J8"/>
<dbReference type="GeneID" id="98107138"/>
<dbReference type="KEGG" id="bml:BMA10229_A1946"/>
<dbReference type="HOGENOM" id="CLU_135723_6_2_4"/>
<dbReference type="Proteomes" id="UP000002283">
    <property type="component" value="Chromosome I"/>
</dbReference>
<dbReference type="GO" id="GO:0005737">
    <property type="term" value="C:cytoplasm"/>
    <property type="evidence" value="ECO:0007669"/>
    <property type="project" value="UniProtKB-ARBA"/>
</dbReference>
<dbReference type="GO" id="GO:1990904">
    <property type="term" value="C:ribonucleoprotein complex"/>
    <property type="evidence" value="ECO:0007669"/>
    <property type="project" value="UniProtKB-KW"/>
</dbReference>
<dbReference type="GO" id="GO:0005840">
    <property type="term" value="C:ribosome"/>
    <property type="evidence" value="ECO:0007669"/>
    <property type="project" value="UniProtKB-KW"/>
</dbReference>
<dbReference type="GO" id="GO:0003735">
    <property type="term" value="F:structural constituent of ribosome"/>
    <property type="evidence" value="ECO:0007669"/>
    <property type="project" value="InterPro"/>
</dbReference>
<dbReference type="GO" id="GO:0006412">
    <property type="term" value="P:translation"/>
    <property type="evidence" value="ECO:0007669"/>
    <property type="project" value="UniProtKB-UniRule"/>
</dbReference>
<dbReference type="HAMAP" id="MF_00251">
    <property type="entry name" value="Ribosomal_bL36"/>
    <property type="match status" value="1"/>
</dbReference>
<dbReference type="InterPro" id="IPR000473">
    <property type="entry name" value="Ribosomal_bL36"/>
</dbReference>
<dbReference type="InterPro" id="IPR035977">
    <property type="entry name" value="Ribosomal_bL36_sp"/>
</dbReference>
<dbReference type="NCBIfam" id="TIGR01022">
    <property type="entry name" value="rpmJ_bact"/>
    <property type="match status" value="1"/>
</dbReference>
<dbReference type="PANTHER" id="PTHR42888">
    <property type="entry name" value="50S RIBOSOMAL PROTEIN L36, CHLOROPLASTIC"/>
    <property type="match status" value="1"/>
</dbReference>
<dbReference type="PANTHER" id="PTHR42888:SF1">
    <property type="entry name" value="LARGE RIBOSOMAL SUBUNIT PROTEIN BL36C"/>
    <property type="match status" value="1"/>
</dbReference>
<dbReference type="Pfam" id="PF00444">
    <property type="entry name" value="Ribosomal_L36"/>
    <property type="match status" value="1"/>
</dbReference>
<dbReference type="SUPFAM" id="SSF57840">
    <property type="entry name" value="Ribosomal protein L36"/>
    <property type="match status" value="1"/>
</dbReference>
<dbReference type="PROSITE" id="PS00828">
    <property type="entry name" value="RIBOSOMAL_L36"/>
    <property type="match status" value="1"/>
</dbReference>
<comment type="similarity">
    <text evidence="1">Belongs to the bacterial ribosomal protein bL36 family.</text>
</comment>
<comment type="sequence caution" evidence="2">
    <conflict type="erroneous initiation">
        <sequence resource="EMBL-CDS" id="ABN03552"/>
    </conflict>
</comment>
<name>RL36_BURM9</name>
<reference key="1">
    <citation type="journal article" date="2010" name="Genome Biol. Evol.">
        <title>Continuing evolution of Burkholderia mallei through genome reduction and large-scale rearrangements.</title>
        <authorList>
            <person name="Losada L."/>
            <person name="Ronning C.M."/>
            <person name="DeShazer D."/>
            <person name="Woods D."/>
            <person name="Fedorova N."/>
            <person name="Kim H.S."/>
            <person name="Shabalina S.A."/>
            <person name="Pearson T.R."/>
            <person name="Brinkac L."/>
            <person name="Tan P."/>
            <person name="Nandi T."/>
            <person name="Crabtree J."/>
            <person name="Badger J."/>
            <person name="Beckstrom-Sternberg S."/>
            <person name="Saqib M."/>
            <person name="Schutzer S.E."/>
            <person name="Keim P."/>
            <person name="Nierman W.C."/>
        </authorList>
    </citation>
    <scope>NUCLEOTIDE SEQUENCE [LARGE SCALE GENOMIC DNA]</scope>
    <source>
        <strain>NCTC 10229</strain>
    </source>
</reference>
<sequence>MKVMASVKRICRNCKIIKRKGVVRVICSSDPRHKQRQG</sequence>
<accession>A2S7J8</accession>
<keyword id="KW-0687">Ribonucleoprotein</keyword>
<keyword id="KW-0689">Ribosomal protein</keyword>
<feature type="chain" id="PRO_0000344648" description="Large ribosomal subunit protein bL36">
    <location>
        <begin position="1"/>
        <end position="38"/>
    </location>
</feature>
<gene>
    <name evidence="1" type="primary">rpmJ</name>
    <name type="ordered locus">BMA10229_A1946</name>
</gene>